<gene>
    <name evidence="2" type="primary">atpF</name>
    <name type="ordered locus">Cpha266_2707</name>
</gene>
<name>ATPF_CHLPD</name>
<protein>
    <recommendedName>
        <fullName evidence="2">ATP synthase subunit b</fullName>
    </recommendedName>
    <alternativeName>
        <fullName evidence="2">ATP synthase F(0) sector subunit b</fullName>
    </alternativeName>
    <alternativeName>
        <fullName evidence="2">ATPase subunit I</fullName>
    </alternativeName>
    <alternativeName>
        <fullName evidence="2">F-type ATPase subunit b</fullName>
        <shortName evidence="2">F-ATPase subunit b</shortName>
    </alternativeName>
</protein>
<accession>A1BJW4</accession>
<organism>
    <name type="scientific">Chlorobium phaeobacteroides (strain DSM 266 / SMG 266 / 2430)</name>
    <dbReference type="NCBI Taxonomy" id="290317"/>
    <lineage>
        <taxon>Bacteria</taxon>
        <taxon>Pseudomonadati</taxon>
        <taxon>Chlorobiota</taxon>
        <taxon>Chlorobiia</taxon>
        <taxon>Chlorobiales</taxon>
        <taxon>Chlorobiaceae</taxon>
        <taxon>Chlorobium/Pelodictyon group</taxon>
        <taxon>Chlorobium</taxon>
    </lineage>
</organism>
<keyword id="KW-0066">ATP synthesis</keyword>
<keyword id="KW-0997">Cell inner membrane</keyword>
<keyword id="KW-1003">Cell membrane</keyword>
<keyword id="KW-0138">CF(0)</keyword>
<keyword id="KW-0375">Hydrogen ion transport</keyword>
<keyword id="KW-0406">Ion transport</keyword>
<keyword id="KW-0472">Membrane</keyword>
<keyword id="KW-1185">Reference proteome</keyword>
<keyword id="KW-0812">Transmembrane</keyword>
<keyword id="KW-1133">Transmembrane helix</keyword>
<keyword id="KW-0813">Transport</keyword>
<sequence length="175" mass="19467">MLTSGVILLNGGLLSPNPGLIFWTTVSFVIVLLILRKLAWGPIISALEEREKGIQSSIDRAHKAKDEAEEILRKNRELLAKADAESDKIIREGKEYGEKLRAGIAEKAQAEAAKMISMAKEEIEQEKRRALDVLRNEVAELAVMGAEKIIKTSLDADMQKKIVDSMIQDLSTKRN</sequence>
<proteinExistence type="inferred from homology"/>
<dbReference type="EMBL" id="CP000492">
    <property type="protein sequence ID" value="ABL66691.1"/>
    <property type="molecule type" value="Genomic_DNA"/>
</dbReference>
<dbReference type="RefSeq" id="WP_015961218.1">
    <property type="nucleotide sequence ID" value="NC_008639.1"/>
</dbReference>
<dbReference type="SMR" id="A1BJW4"/>
<dbReference type="STRING" id="290317.Cpha266_2707"/>
<dbReference type="KEGG" id="cph:Cpha266_2707"/>
<dbReference type="eggNOG" id="COG0711">
    <property type="taxonomic scope" value="Bacteria"/>
</dbReference>
<dbReference type="HOGENOM" id="CLU_079215_4_1_10"/>
<dbReference type="OrthoDB" id="9795289at2"/>
<dbReference type="Proteomes" id="UP000008701">
    <property type="component" value="Chromosome"/>
</dbReference>
<dbReference type="GO" id="GO:0005886">
    <property type="term" value="C:plasma membrane"/>
    <property type="evidence" value="ECO:0007669"/>
    <property type="project" value="UniProtKB-SubCell"/>
</dbReference>
<dbReference type="GO" id="GO:0045259">
    <property type="term" value="C:proton-transporting ATP synthase complex"/>
    <property type="evidence" value="ECO:0007669"/>
    <property type="project" value="UniProtKB-KW"/>
</dbReference>
<dbReference type="GO" id="GO:0046933">
    <property type="term" value="F:proton-transporting ATP synthase activity, rotational mechanism"/>
    <property type="evidence" value="ECO:0007669"/>
    <property type="project" value="UniProtKB-UniRule"/>
</dbReference>
<dbReference type="GO" id="GO:0046961">
    <property type="term" value="F:proton-transporting ATPase activity, rotational mechanism"/>
    <property type="evidence" value="ECO:0007669"/>
    <property type="project" value="TreeGrafter"/>
</dbReference>
<dbReference type="CDD" id="cd06503">
    <property type="entry name" value="ATP-synt_Fo_b"/>
    <property type="match status" value="1"/>
</dbReference>
<dbReference type="Gene3D" id="1.20.5.620">
    <property type="entry name" value="F1F0 ATP synthase subunit B, membrane domain"/>
    <property type="match status" value="1"/>
</dbReference>
<dbReference type="HAMAP" id="MF_01398">
    <property type="entry name" value="ATP_synth_b_bprime"/>
    <property type="match status" value="1"/>
</dbReference>
<dbReference type="InterPro" id="IPR028987">
    <property type="entry name" value="ATP_synth_B-like_membr_sf"/>
</dbReference>
<dbReference type="InterPro" id="IPR002146">
    <property type="entry name" value="ATP_synth_b/b'su_bac/chlpt"/>
</dbReference>
<dbReference type="InterPro" id="IPR005864">
    <property type="entry name" value="ATP_synth_F0_bsu_bac"/>
</dbReference>
<dbReference type="InterPro" id="IPR050059">
    <property type="entry name" value="ATP_synthase_B_chain"/>
</dbReference>
<dbReference type="NCBIfam" id="TIGR01144">
    <property type="entry name" value="ATP_synt_b"/>
    <property type="match status" value="1"/>
</dbReference>
<dbReference type="NCBIfam" id="NF011042">
    <property type="entry name" value="PRK14472.1"/>
    <property type="match status" value="1"/>
</dbReference>
<dbReference type="PANTHER" id="PTHR33445:SF1">
    <property type="entry name" value="ATP SYNTHASE SUBUNIT B"/>
    <property type="match status" value="1"/>
</dbReference>
<dbReference type="PANTHER" id="PTHR33445">
    <property type="entry name" value="ATP SYNTHASE SUBUNIT B', CHLOROPLASTIC"/>
    <property type="match status" value="1"/>
</dbReference>
<dbReference type="Pfam" id="PF00430">
    <property type="entry name" value="ATP-synt_B"/>
    <property type="match status" value="1"/>
</dbReference>
<dbReference type="SUPFAM" id="SSF81573">
    <property type="entry name" value="F1F0 ATP synthase subunit B, membrane domain"/>
    <property type="match status" value="1"/>
</dbReference>
<reference key="1">
    <citation type="submission" date="2006-12" db="EMBL/GenBank/DDBJ databases">
        <title>Complete sequence of Chlorobium phaeobacteroides DSM 266.</title>
        <authorList>
            <consortium name="US DOE Joint Genome Institute"/>
            <person name="Copeland A."/>
            <person name="Lucas S."/>
            <person name="Lapidus A."/>
            <person name="Barry K."/>
            <person name="Detter J.C."/>
            <person name="Glavina del Rio T."/>
            <person name="Hammon N."/>
            <person name="Israni S."/>
            <person name="Pitluck S."/>
            <person name="Goltsman E."/>
            <person name="Schmutz J."/>
            <person name="Larimer F."/>
            <person name="Land M."/>
            <person name="Hauser L."/>
            <person name="Mikhailova N."/>
            <person name="Li T."/>
            <person name="Overmann J."/>
            <person name="Bryant D.A."/>
            <person name="Richardson P."/>
        </authorList>
    </citation>
    <scope>NUCLEOTIDE SEQUENCE [LARGE SCALE GENOMIC DNA]</scope>
    <source>
        <strain>DSM 266 / SMG 266 / 2430</strain>
    </source>
</reference>
<evidence type="ECO:0000250" key="1"/>
<evidence type="ECO:0000255" key="2">
    <source>
        <dbReference type="HAMAP-Rule" id="MF_01398"/>
    </source>
</evidence>
<comment type="function">
    <text evidence="2">F(1)F(0) ATP synthase produces ATP from ADP in the presence of a proton or sodium gradient. F-type ATPases consist of two structural domains, F(1) containing the extramembraneous catalytic core and F(0) containing the membrane proton channel, linked together by a central stalk and a peripheral stalk. During catalysis, ATP synthesis in the catalytic domain of F(1) is coupled via a rotary mechanism of the central stalk subunits to proton translocation.</text>
</comment>
<comment type="function">
    <text evidence="2">Component of the F(0) channel, it forms part of the peripheral stalk, linking F(1) to F(0).</text>
</comment>
<comment type="subunit">
    <text evidence="1">F-type ATPases have 2 components, F(1) - the catalytic core - and F(0) - the membrane proton channel. F(1) has five subunits: alpha(3), beta(3), gamma(1), delta(1), epsilon(1). F(0) has four main subunits: a(1), b(2) and c(10-14). The alpha and beta chains form an alternating ring which encloses part of the gamma chain. F(1) is attached to F(0) by a central stalk formed by the gamma and epsilon chains, while a peripheral stalk is formed by the delta and b chains (By similarity).</text>
</comment>
<comment type="subcellular location">
    <subcellularLocation>
        <location evidence="2">Cell inner membrane</location>
        <topology evidence="2">Single-pass membrane protein</topology>
    </subcellularLocation>
</comment>
<comment type="similarity">
    <text evidence="2">Belongs to the ATPase B chain family.</text>
</comment>
<feature type="chain" id="PRO_0000368411" description="ATP synthase subunit b">
    <location>
        <begin position="1"/>
        <end position="175"/>
    </location>
</feature>
<feature type="transmembrane region" description="Helical" evidence="2">
    <location>
        <begin position="14"/>
        <end position="34"/>
    </location>
</feature>